<name>HIS6_STAEQ</name>
<keyword id="KW-0028">Amino-acid biosynthesis</keyword>
<keyword id="KW-0963">Cytoplasm</keyword>
<keyword id="KW-0368">Histidine biosynthesis</keyword>
<keyword id="KW-0456">Lyase</keyword>
<keyword id="KW-1185">Reference proteome</keyword>
<feature type="chain" id="PRO_0000142239" description="Imidazole glycerol phosphate synthase subunit HisF">
    <location>
        <begin position="1"/>
        <end position="252"/>
    </location>
</feature>
<feature type="active site" evidence="1">
    <location>
        <position position="11"/>
    </location>
</feature>
<feature type="active site" evidence="1">
    <location>
        <position position="130"/>
    </location>
</feature>
<sequence>MIKKRVIPCLDVKDGRVVKGIQFQSLRDIGNPVDLALYYNEAGADELVFLDISKTEAGHDLMIEVIEATAKQLFIPLTVGGGIQNLDDITQLLNHGADKISLNSSALKHPELIRQASEKFGRQCICIAIDSFYDKDREDYFCTTHGGKKLTDVSVYDWVQEVEHLGAGELLITSMHHDGMKQGFDIEHLAKIKQLVNIPIIASGGGGNAQHFVELFQQTDVSAGLAASILHDQETTVAEIKDKMREGGILVR</sequence>
<dbReference type="EC" id="4.3.2.10" evidence="1"/>
<dbReference type="EMBL" id="CP000029">
    <property type="protein sequence ID" value="AAW53198.1"/>
    <property type="molecule type" value="Genomic_DNA"/>
</dbReference>
<dbReference type="RefSeq" id="WP_002470291.1">
    <property type="nucleotide sequence ID" value="NC_002976.3"/>
</dbReference>
<dbReference type="SMR" id="Q5HKP2"/>
<dbReference type="STRING" id="176279.SERP2301"/>
<dbReference type="KEGG" id="ser:SERP2301"/>
<dbReference type="eggNOG" id="COG0107">
    <property type="taxonomic scope" value="Bacteria"/>
</dbReference>
<dbReference type="HOGENOM" id="CLU_048577_4_0_9"/>
<dbReference type="UniPathway" id="UPA00031">
    <property type="reaction ID" value="UER00010"/>
</dbReference>
<dbReference type="Proteomes" id="UP000000531">
    <property type="component" value="Chromosome"/>
</dbReference>
<dbReference type="GO" id="GO:0005737">
    <property type="term" value="C:cytoplasm"/>
    <property type="evidence" value="ECO:0007669"/>
    <property type="project" value="UniProtKB-SubCell"/>
</dbReference>
<dbReference type="GO" id="GO:0000107">
    <property type="term" value="F:imidazoleglycerol-phosphate synthase activity"/>
    <property type="evidence" value="ECO:0007669"/>
    <property type="project" value="UniProtKB-UniRule"/>
</dbReference>
<dbReference type="GO" id="GO:0016829">
    <property type="term" value="F:lyase activity"/>
    <property type="evidence" value="ECO:0007669"/>
    <property type="project" value="UniProtKB-KW"/>
</dbReference>
<dbReference type="GO" id="GO:0000105">
    <property type="term" value="P:L-histidine biosynthetic process"/>
    <property type="evidence" value="ECO:0007669"/>
    <property type="project" value="UniProtKB-UniRule"/>
</dbReference>
<dbReference type="CDD" id="cd04731">
    <property type="entry name" value="HisF"/>
    <property type="match status" value="1"/>
</dbReference>
<dbReference type="Gene3D" id="3.20.20.70">
    <property type="entry name" value="Aldolase class I"/>
    <property type="match status" value="1"/>
</dbReference>
<dbReference type="HAMAP" id="MF_01013">
    <property type="entry name" value="HisF"/>
    <property type="match status" value="1"/>
</dbReference>
<dbReference type="InterPro" id="IPR013785">
    <property type="entry name" value="Aldolase_TIM"/>
</dbReference>
<dbReference type="InterPro" id="IPR006062">
    <property type="entry name" value="His_biosynth"/>
</dbReference>
<dbReference type="InterPro" id="IPR004651">
    <property type="entry name" value="HisF"/>
</dbReference>
<dbReference type="InterPro" id="IPR050064">
    <property type="entry name" value="IGPS_HisA/HisF"/>
</dbReference>
<dbReference type="InterPro" id="IPR011060">
    <property type="entry name" value="RibuloseP-bd_barrel"/>
</dbReference>
<dbReference type="NCBIfam" id="TIGR00735">
    <property type="entry name" value="hisF"/>
    <property type="match status" value="1"/>
</dbReference>
<dbReference type="PANTHER" id="PTHR21235:SF2">
    <property type="entry name" value="IMIDAZOLE GLYCEROL PHOSPHATE SYNTHASE HISHF"/>
    <property type="match status" value="1"/>
</dbReference>
<dbReference type="PANTHER" id="PTHR21235">
    <property type="entry name" value="IMIDAZOLE GLYCEROL PHOSPHATE SYNTHASE SUBUNIT HISF/H IGP SYNTHASE SUBUNIT HISF/H"/>
    <property type="match status" value="1"/>
</dbReference>
<dbReference type="Pfam" id="PF00977">
    <property type="entry name" value="His_biosynth"/>
    <property type="match status" value="1"/>
</dbReference>
<dbReference type="SUPFAM" id="SSF51366">
    <property type="entry name" value="Ribulose-phoshate binding barrel"/>
    <property type="match status" value="1"/>
</dbReference>
<comment type="function">
    <text evidence="1">IGPS catalyzes the conversion of PRFAR and glutamine to IGP, AICAR and glutamate. The HisF subunit catalyzes the cyclization activity that produces IGP and AICAR from PRFAR using the ammonia provided by the HisH subunit.</text>
</comment>
<comment type="catalytic activity">
    <reaction evidence="1">
        <text>5-[(5-phospho-1-deoxy-D-ribulos-1-ylimino)methylamino]-1-(5-phospho-beta-D-ribosyl)imidazole-4-carboxamide + L-glutamine = D-erythro-1-(imidazol-4-yl)glycerol 3-phosphate + 5-amino-1-(5-phospho-beta-D-ribosyl)imidazole-4-carboxamide + L-glutamate + H(+)</text>
        <dbReference type="Rhea" id="RHEA:24793"/>
        <dbReference type="ChEBI" id="CHEBI:15378"/>
        <dbReference type="ChEBI" id="CHEBI:29985"/>
        <dbReference type="ChEBI" id="CHEBI:58278"/>
        <dbReference type="ChEBI" id="CHEBI:58359"/>
        <dbReference type="ChEBI" id="CHEBI:58475"/>
        <dbReference type="ChEBI" id="CHEBI:58525"/>
        <dbReference type="EC" id="4.3.2.10"/>
    </reaction>
</comment>
<comment type="pathway">
    <text evidence="1">Amino-acid biosynthesis; L-histidine biosynthesis; L-histidine from 5-phospho-alpha-D-ribose 1-diphosphate: step 5/9.</text>
</comment>
<comment type="subunit">
    <text evidence="1">Heterodimer of HisH and HisF.</text>
</comment>
<comment type="subcellular location">
    <subcellularLocation>
        <location evidence="1">Cytoplasm</location>
    </subcellularLocation>
</comment>
<comment type="similarity">
    <text evidence="1">Belongs to the HisA/HisF family.</text>
</comment>
<reference key="1">
    <citation type="journal article" date="2005" name="J. Bacteriol.">
        <title>Insights on evolution of virulence and resistance from the complete genome analysis of an early methicillin-resistant Staphylococcus aureus strain and a biofilm-producing methicillin-resistant Staphylococcus epidermidis strain.</title>
        <authorList>
            <person name="Gill S.R."/>
            <person name="Fouts D.E."/>
            <person name="Archer G.L."/>
            <person name="Mongodin E.F."/>
            <person name="DeBoy R.T."/>
            <person name="Ravel J."/>
            <person name="Paulsen I.T."/>
            <person name="Kolonay J.F."/>
            <person name="Brinkac L.M."/>
            <person name="Beanan M.J."/>
            <person name="Dodson R.J."/>
            <person name="Daugherty S.C."/>
            <person name="Madupu R."/>
            <person name="Angiuoli S.V."/>
            <person name="Durkin A.S."/>
            <person name="Haft D.H."/>
            <person name="Vamathevan J.J."/>
            <person name="Khouri H."/>
            <person name="Utterback T.R."/>
            <person name="Lee C."/>
            <person name="Dimitrov G."/>
            <person name="Jiang L."/>
            <person name="Qin H."/>
            <person name="Weidman J."/>
            <person name="Tran K."/>
            <person name="Kang K.H."/>
            <person name="Hance I.R."/>
            <person name="Nelson K.E."/>
            <person name="Fraser C.M."/>
        </authorList>
    </citation>
    <scope>NUCLEOTIDE SEQUENCE [LARGE SCALE GENOMIC DNA]</scope>
    <source>
        <strain>ATCC 35984 / DSM 28319 / BCRC 17069 / CCUG 31568 / BM 3577 / RP62A</strain>
    </source>
</reference>
<protein>
    <recommendedName>
        <fullName evidence="1">Imidazole glycerol phosphate synthase subunit HisF</fullName>
        <ecNumber evidence="1">4.3.2.10</ecNumber>
    </recommendedName>
    <alternativeName>
        <fullName evidence="1">IGP synthase cyclase subunit</fullName>
    </alternativeName>
    <alternativeName>
        <fullName evidence="1">IGP synthase subunit HisF</fullName>
    </alternativeName>
    <alternativeName>
        <fullName evidence="1">ImGP synthase subunit HisF</fullName>
        <shortName evidence="1">IGPS subunit HisF</shortName>
    </alternativeName>
</protein>
<gene>
    <name evidence="1" type="primary">hisF</name>
    <name type="ordered locus">SERP2301</name>
</gene>
<accession>Q5HKP2</accession>
<organism>
    <name type="scientific">Staphylococcus epidermidis (strain ATCC 35984 / DSM 28319 / BCRC 17069 / CCUG 31568 / BM 3577 / RP62A)</name>
    <dbReference type="NCBI Taxonomy" id="176279"/>
    <lineage>
        <taxon>Bacteria</taxon>
        <taxon>Bacillati</taxon>
        <taxon>Bacillota</taxon>
        <taxon>Bacilli</taxon>
        <taxon>Bacillales</taxon>
        <taxon>Staphylococcaceae</taxon>
        <taxon>Staphylococcus</taxon>
    </lineage>
</organism>
<proteinExistence type="inferred from homology"/>
<evidence type="ECO:0000255" key="1">
    <source>
        <dbReference type="HAMAP-Rule" id="MF_01013"/>
    </source>
</evidence>